<organismHost>
    <name type="scientific">Enterobacteriaceae</name>
    <dbReference type="NCBI Taxonomy" id="543"/>
</organismHost>
<gene>
    <name evidence="7" type="primary">mod</name>
</gene>
<reference key="1">
    <citation type="journal article" date="1988" name="J. Mol. Biol.">
        <title>Type III DNA restriction and modification systems EcoP1 and EcoP15. Nucleotide sequence of the EcoP1 operon, the EcoP15 mod gene and some EcoP1 mod mutants.</title>
        <authorList>
            <person name="Huembelin M."/>
            <person name="Suri B."/>
            <person name="Rao D.N."/>
            <person name="Hornby D.P."/>
            <person name="Eberle H."/>
            <person name="Pripfl T."/>
            <person name="Kenel S."/>
            <person name="Bickle T.A."/>
        </authorList>
    </citation>
    <scope>NUCLEOTIDE SEQUENCE [GENOMIC DNA]</scope>
    <scope>PROTEIN SEQUENCE OF 1-5</scope>
    <scope>FUNCTION</scope>
    <scope>MUTAGENESIS OF THR-289 AND THR-316</scope>
</reference>
<reference key="2">
    <citation type="journal article" date="2004" name="J. Bacteriol.">
        <title>Genome of bacteriophage P1.</title>
        <authorList>
            <person name="Lobocka M.B."/>
            <person name="Rose D.J."/>
            <person name="Plunkett G. III"/>
            <person name="Rusin M."/>
            <person name="Samojedny A."/>
            <person name="Lehnherr H."/>
            <person name="Yarmolinsky M.B."/>
            <person name="Blattner F.R."/>
        </authorList>
    </citation>
    <scope>NUCLEOTIDE SEQUENCE [LARGE SCALE GENOMIC DNA]</scope>
    <scope>PRESENCE OF INSERTION SEQUENCE IS5</scope>
</reference>
<reference key="3">
    <citation type="journal article" date="2003" name="Nucleic Acids Res.">
        <title>A nomenclature for restriction enzymes, DNA methyltransferases, homing endonucleases and their genes.</title>
        <authorList>
            <person name="Roberts R.J."/>
            <person name="Belfort M."/>
            <person name="Bestor T."/>
            <person name="Bhagwat A.S."/>
            <person name="Bickle T.A."/>
            <person name="Bitinaite J."/>
            <person name="Blumenthal R.M."/>
            <person name="Degtyarev S.K."/>
            <person name="Dryden D.T."/>
            <person name="Dybvig K."/>
            <person name="Firman K."/>
            <person name="Gromova E.S."/>
            <person name="Gumport R.I."/>
            <person name="Halford S.E."/>
            <person name="Hattman S."/>
            <person name="Heitman J."/>
            <person name="Hornby D.P."/>
            <person name="Janulaitis A."/>
            <person name="Jeltsch A."/>
            <person name="Josephsen J."/>
            <person name="Kiss A."/>
            <person name="Klaenhammer T.R."/>
            <person name="Kobayashi I."/>
            <person name="Kong H."/>
            <person name="Krueger D.H."/>
            <person name="Lacks S."/>
            <person name="Marinus M.G."/>
            <person name="Miyahara M."/>
            <person name="Morgan R.D."/>
            <person name="Murray N.E."/>
            <person name="Nagaraja V."/>
            <person name="Piekarowicz A."/>
            <person name="Pingoud A."/>
            <person name="Raleigh E."/>
            <person name="Rao D.N."/>
            <person name="Reich N."/>
            <person name="Repin V.E."/>
            <person name="Selker E.U."/>
            <person name="Shaw P.C."/>
            <person name="Stein D.C."/>
            <person name="Stoddard B.L."/>
            <person name="Szybalski W."/>
            <person name="Trautner T.A."/>
            <person name="Van Etten J.L."/>
            <person name="Vitor J.M."/>
            <person name="Wilson G.G."/>
            <person name="Xu S.Y."/>
        </authorList>
    </citation>
    <scope>NOMENCLATURE</scope>
    <scope>SUBTYPE</scope>
</reference>
<reference key="4">
    <citation type="journal article" date="2001" name="J. Mol. Biol.">
        <title>Subunit assembly and mode of DNA cleavage of the type III restriction endonucleases EcoP1I and EcoP15I.</title>
        <authorList>
            <person name="Janscak P."/>
            <person name="Sandmeier U."/>
            <person name="Szczelkun M.D."/>
            <person name="Bickle T.A."/>
        </authorList>
    </citation>
    <scope>FUNCTION</scope>
    <scope>SUBUNIT</scope>
</reference>
<dbReference type="EC" id="2.1.1.72"/>
<dbReference type="EMBL" id="X06287">
    <property type="protein sequence ID" value="CAA29614.1"/>
    <property type="molecule type" value="Genomic_DNA"/>
</dbReference>
<dbReference type="EMBL" id="AF234172">
    <property type="status" value="NOT_ANNOTATED_CDS"/>
    <property type="molecule type" value="Genomic_DNA"/>
</dbReference>
<dbReference type="PIR" id="S01351">
    <property type="entry name" value="S01351"/>
</dbReference>
<dbReference type="SMR" id="P08763"/>
<dbReference type="REBASE" id="3390">
    <property type="entry name" value="M.EcoPI"/>
</dbReference>
<dbReference type="PRO" id="PR:P08763"/>
<dbReference type="Proteomes" id="UP000008091">
    <property type="component" value="Genome"/>
</dbReference>
<dbReference type="GO" id="GO:0003677">
    <property type="term" value="F:DNA binding"/>
    <property type="evidence" value="ECO:0007669"/>
    <property type="project" value="UniProtKB-KW"/>
</dbReference>
<dbReference type="GO" id="GO:0008170">
    <property type="term" value="F:N-methyltransferase activity"/>
    <property type="evidence" value="ECO:0007669"/>
    <property type="project" value="InterPro"/>
</dbReference>
<dbReference type="GO" id="GO:0009007">
    <property type="term" value="F:site-specific DNA-methyltransferase (adenine-specific) activity"/>
    <property type="evidence" value="ECO:0007669"/>
    <property type="project" value="UniProtKB-EC"/>
</dbReference>
<dbReference type="GO" id="GO:0032259">
    <property type="term" value="P:methylation"/>
    <property type="evidence" value="ECO:0007669"/>
    <property type="project" value="UniProtKB-KW"/>
</dbReference>
<dbReference type="Gene3D" id="3.40.50.150">
    <property type="entry name" value="Vaccinia Virus protein VP39"/>
    <property type="match status" value="1"/>
</dbReference>
<dbReference type="InterPro" id="IPR002941">
    <property type="entry name" value="DNA_methylase_N4/N6"/>
</dbReference>
<dbReference type="InterPro" id="IPR002052">
    <property type="entry name" value="DNA_methylase_N6_adenine_CS"/>
</dbReference>
<dbReference type="InterPro" id="IPR002295">
    <property type="entry name" value="N4/N6-MTase_EcoPI_Mod-like"/>
</dbReference>
<dbReference type="InterPro" id="IPR029063">
    <property type="entry name" value="SAM-dependent_MTases_sf"/>
</dbReference>
<dbReference type="InterPro" id="IPR041405">
    <property type="entry name" value="T3RM_EcoP15I_C"/>
</dbReference>
<dbReference type="Pfam" id="PF01555">
    <property type="entry name" value="N6_N4_Mtase"/>
    <property type="match status" value="1"/>
</dbReference>
<dbReference type="Pfam" id="PF18273">
    <property type="entry name" value="T3RM_EcoP15I_C"/>
    <property type="match status" value="1"/>
</dbReference>
<dbReference type="PIRSF" id="PIRSF015855">
    <property type="entry name" value="TypeIII_Mtase_mKpnI"/>
    <property type="match status" value="1"/>
</dbReference>
<dbReference type="PRINTS" id="PR00506">
    <property type="entry name" value="D21N6MTFRASE"/>
</dbReference>
<dbReference type="SUPFAM" id="SSF53335">
    <property type="entry name" value="S-adenosyl-L-methionine-dependent methyltransferases"/>
    <property type="match status" value="1"/>
</dbReference>
<dbReference type="PROSITE" id="PS00092">
    <property type="entry name" value="N6_MTASE"/>
    <property type="match status" value="1"/>
</dbReference>
<feature type="chain" id="PRO_0000088030" description="Type III restriction-modification enzyme EcoPI Mod subunit">
    <location>
        <begin position="1"/>
        <end position="646"/>
    </location>
</feature>
<feature type="region of interest" description="Binding of S-adenosyl methionine" evidence="1">
    <location>
        <begin position="123"/>
        <end position="126"/>
    </location>
</feature>
<feature type="mutagenesis site" description="In c2-134; defective in DNA modification." evidence="4">
    <original>T</original>
    <variation>I</variation>
    <location>
        <position position="289"/>
    </location>
</feature>
<feature type="mutagenesis site" description="In c2-440; defective in DNA modification." evidence="4">
    <original>T</original>
    <variation>I</variation>
    <location>
        <position position="316"/>
    </location>
</feature>
<keyword id="KW-0903">Direct protein sequencing</keyword>
<keyword id="KW-0238">DNA-binding</keyword>
<keyword id="KW-0489">Methyltransferase</keyword>
<keyword id="KW-1185">Reference proteome</keyword>
<keyword id="KW-0949">S-adenosyl-L-methionine</keyword>
<keyword id="KW-0808">Transferase</keyword>
<name>T3MO_BPP1</name>
<sequence>MKKETIFSEVETANSKQLAVLKANFPQCFDKNGAFIQEKLLEIIRASEVELSKESYSLNWLGKSYARLLANLPPKTLLAEDKTHNQQEENKNSQNLLIKGDNLEVLKHMVNAYAEKVNMIYIDPPYNTGKDGFVYNDDRKFTPEQLSELAGIELDEANRILEFTTKGSSSHSAWLTFIYPRLYIARELLKEDGVIFISIDDNEDKQLGLLCDEVFGQGNFVAKLPTIMNLKGNHDNFGFSDTHEYIYVYAKNKDVCSLGQFDIDESEVEKEWDEDEYGLFKRADTLKRTGQDASRKSRPKGWFPVFINSENKVYVTDDDKPLNEDDYVLYPVSPTGEELSWSWGKKKINDEFYNLIVIDIKDGKNIYKKQRPALGELPTKKPKSIWYKPEYSTSTATTELKNLLGAKLFEGPKPVPLITDLVKIGTKKDSLVLDFFAGSGTTAEAVAYLNEKDSGCRNFICIQKDEVINKTKNAYSLGYRSIFEITKKRIQEVFKKSTTTSDNAAKIGFKVIHTIDDFRAKVESELTLTNHTFFDDAVLTPEQYDALLTTWCVYDGSLLTTPIEDVDLSGYTAHFCNGRLYLIAPNFTSEALKALLQKLDSDEDFAPNKVVFYGCNFESAKQRELNEALKSYANKKSIELDLVVRN</sequence>
<organism>
    <name type="scientific">Escherichia phage P1</name>
    <name type="common">Bacteriophage P1</name>
    <dbReference type="NCBI Taxonomy" id="2886926"/>
    <lineage>
        <taxon>Viruses</taxon>
        <taxon>Duplodnaviria</taxon>
        <taxon>Heunggongvirae</taxon>
        <taxon>Uroviricota</taxon>
        <taxon>Caudoviricetes</taxon>
        <taxon>Punavirus</taxon>
        <taxon>Punavirus P1</taxon>
    </lineage>
</organism>
<comment type="function">
    <text evidence="2 4 6">A beta subtype methylase that binds the system-specific DNA recognition site 5'-AGACC-3' and methylates A-3 (of only 1 strand as the other does not have an A residue). DNA restriction requires both the Res and Mod subunits.</text>
</comment>
<comment type="catalytic activity">
    <reaction>
        <text>a 2'-deoxyadenosine in DNA + S-adenosyl-L-methionine = an N(6)-methyl-2'-deoxyadenosine in DNA + S-adenosyl-L-homocysteine + H(+)</text>
        <dbReference type="Rhea" id="RHEA:15197"/>
        <dbReference type="Rhea" id="RHEA-COMP:12418"/>
        <dbReference type="Rhea" id="RHEA-COMP:12419"/>
        <dbReference type="ChEBI" id="CHEBI:15378"/>
        <dbReference type="ChEBI" id="CHEBI:57856"/>
        <dbReference type="ChEBI" id="CHEBI:59789"/>
        <dbReference type="ChEBI" id="CHEBI:90615"/>
        <dbReference type="ChEBI" id="CHEBI:90616"/>
        <dbReference type="EC" id="2.1.1.72"/>
    </reaction>
</comment>
<comment type="subunit">
    <text evidence="2">Homodimer. A heterotetramer with stoichiometry Res(2)Mod(2).</text>
</comment>
<comment type="miscellaneous">
    <text evidence="5 7">This R-M system is also called EcoP1 and EcoP1I.</text>
</comment>
<comment type="similarity">
    <text evidence="8">Belongs to the N(4)/N(6)-methyltransferase family.</text>
</comment>
<comment type="caution">
    <text evidence="3">This gene is interrupted by an IS5 insertion sequence in the phage P1 reference proteome UP000008091.</text>
</comment>
<comment type="sequence caution" evidence="8">
    <conflict type="miscellaneous discrepancy">
        <sequence resource="EMBL" id="AF234172"/>
    </conflict>
</comment>
<protein>
    <recommendedName>
        <fullName>Type III restriction-modification enzyme EcoPI Mod subunit</fullName>
        <shortName>M.EcoPI</shortName>
        <ecNumber>2.1.1.72</ecNumber>
    </recommendedName>
    <alternativeName>
        <fullName>EcoPI methyltransferase</fullName>
    </alternativeName>
    <alternativeName>
        <fullName evidence="6">Type III methyltransferase M.EcoPI</fullName>
    </alternativeName>
</protein>
<evidence type="ECO:0000255" key="1"/>
<evidence type="ECO:0000269" key="2">
    <source>
    </source>
</evidence>
<evidence type="ECO:0000269" key="3">
    <source>
    </source>
</evidence>
<evidence type="ECO:0000269" key="4">
    <source>
    </source>
</evidence>
<evidence type="ECO:0000303" key="5">
    <source>
    </source>
</evidence>
<evidence type="ECO:0000303" key="6">
    <source>
    </source>
</evidence>
<evidence type="ECO:0000303" key="7">
    <source>
    </source>
</evidence>
<evidence type="ECO:0000305" key="8"/>
<accession>P08763</accession>
<proteinExistence type="evidence at protein level"/>